<reference key="1">
    <citation type="journal article" date="2000" name="Nature">
        <title>Sequence and analysis of chromosome 3 of the plant Arabidopsis thaliana.</title>
        <authorList>
            <person name="Salanoubat M."/>
            <person name="Lemcke K."/>
            <person name="Rieger M."/>
            <person name="Ansorge W."/>
            <person name="Unseld M."/>
            <person name="Fartmann B."/>
            <person name="Valle G."/>
            <person name="Bloecker H."/>
            <person name="Perez-Alonso M."/>
            <person name="Obermaier B."/>
            <person name="Delseny M."/>
            <person name="Boutry M."/>
            <person name="Grivell L.A."/>
            <person name="Mache R."/>
            <person name="Puigdomenech P."/>
            <person name="De Simone V."/>
            <person name="Choisne N."/>
            <person name="Artiguenave F."/>
            <person name="Robert C."/>
            <person name="Brottier P."/>
            <person name="Wincker P."/>
            <person name="Cattolico L."/>
            <person name="Weissenbach J."/>
            <person name="Saurin W."/>
            <person name="Quetier F."/>
            <person name="Schaefer M."/>
            <person name="Mueller-Auer S."/>
            <person name="Gabel C."/>
            <person name="Fuchs M."/>
            <person name="Benes V."/>
            <person name="Wurmbach E."/>
            <person name="Drzonek H."/>
            <person name="Erfle H."/>
            <person name="Jordan N."/>
            <person name="Bangert S."/>
            <person name="Wiedelmann R."/>
            <person name="Kranz H."/>
            <person name="Voss H."/>
            <person name="Holland R."/>
            <person name="Brandt P."/>
            <person name="Nyakatura G."/>
            <person name="Vezzi A."/>
            <person name="D'Angelo M."/>
            <person name="Pallavicini A."/>
            <person name="Toppo S."/>
            <person name="Simionati B."/>
            <person name="Conrad A."/>
            <person name="Hornischer K."/>
            <person name="Kauer G."/>
            <person name="Loehnert T.-H."/>
            <person name="Nordsiek G."/>
            <person name="Reichelt J."/>
            <person name="Scharfe M."/>
            <person name="Schoen O."/>
            <person name="Bargues M."/>
            <person name="Terol J."/>
            <person name="Climent J."/>
            <person name="Navarro P."/>
            <person name="Collado C."/>
            <person name="Perez-Perez A."/>
            <person name="Ottenwaelder B."/>
            <person name="Duchemin D."/>
            <person name="Cooke R."/>
            <person name="Laudie M."/>
            <person name="Berger-Llauro C."/>
            <person name="Purnelle B."/>
            <person name="Masuy D."/>
            <person name="de Haan M."/>
            <person name="Maarse A.C."/>
            <person name="Alcaraz J.-P."/>
            <person name="Cottet A."/>
            <person name="Casacuberta E."/>
            <person name="Monfort A."/>
            <person name="Argiriou A."/>
            <person name="Flores M."/>
            <person name="Liguori R."/>
            <person name="Vitale D."/>
            <person name="Mannhaupt G."/>
            <person name="Haase D."/>
            <person name="Schoof H."/>
            <person name="Rudd S."/>
            <person name="Zaccaria P."/>
            <person name="Mewes H.-W."/>
            <person name="Mayer K.F.X."/>
            <person name="Kaul S."/>
            <person name="Town C.D."/>
            <person name="Koo H.L."/>
            <person name="Tallon L.J."/>
            <person name="Jenkins J."/>
            <person name="Rooney T."/>
            <person name="Rizzo M."/>
            <person name="Walts A."/>
            <person name="Utterback T."/>
            <person name="Fujii C.Y."/>
            <person name="Shea T.P."/>
            <person name="Creasy T.H."/>
            <person name="Haas B."/>
            <person name="Maiti R."/>
            <person name="Wu D."/>
            <person name="Peterson J."/>
            <person name="Van Aken S."/>
            <person name="Pai G."/>
            <person name="Militscher J."/>
            <person name="Sellers P."/>
            <person name="Gill J.E."/>
            <person name="Feldblyum T.V."/>
            <person name="Preuss D."/>
            <person name="Lin X."/>
            <person name="Nierman W.C."/>
            <person name="Salzberg S.L."/>
            <person name="White O."/>
            <person name="Venter J.C."/>
            <person name="Fraser C.M."/>
            <person name="Kaneko T."/>
            <person name="Nakamura Y."/>
            <person name="Sato S."/>
            <person name="Kato T."/>
            <person name="Asamizu E."/>
            <person name="Sasamoto S."/>
            <person name="Kimura T."/>
            <person name="Idesawa K."/>
            <person name="Kawashima K."/>
            <person name="Kishida Y."/>
            <person name="Kiyokawa C."/>
            <person name="Kohara M."/>
            <person name="Matsumoto M."/>
            <person name="Matsuno A."/>
            <person name="Muraki A."/>
            <person name="Nakayama S."/>
            <person name="Nakazaki N."/>
            <person name="Shinpo S."/>
            <person name="Takeuchi C."/>
            <person name="Wada T."/>
            <person name="Watanabe A."/>
            <person name="Yamada M."/>
            <person name="Yasuda M."/>
            <person name="Tabata S."/>
        </authorList>
    </citation>
    <scope>NUCLEOTIDE SEQUENCE [LARGE SCALE GENOMIC DNA]</scope>
    <source>
        <strain>cv. Columbia</strain>
    </source>
</reference>
<reference key="2">
    <citation type="journal article" date="2017" name="Plant J.">
        <title>Araport11: a complete reannotation of the Arabidopsis thaliana reference genome.</title>
        <authorList>
            <person name="Cheng C.Y."/>
            <person name="Krishnakumar V."/>
            <person name="Chan A.P."/>
            <person name="Thibaud-Nissen F."/>
            <person name="Schobel S."/>
            <person name="Town C.D."/>
        </authorList>
    </citation>
    <scope>GENOME REANNOTATION</scope>
    <source>
        <strain>cv. Columbia</strain>
    </source>
</reference>
<reference key="3">
    <citation type="journal article" date="2005" name="Plant Physiol.">
        <title>Genome organization of more than 300 defensin-like genes in Arabidopsis.</title>
        <authorList>
            <person name="Silverstein K.A.T."/>
            <person name="Graham M.A."/>
            <person name="Paape T.D."/>
            <person name="VandenBosch K.A."/>
        </authorList>
    </citation>
    <scope>GENE FAMILY</scope>
</reference>
<sequence length="81" mass="8871">MEKISAFFVILFLVSSCLVTMSVGDICQTDRDCVEIGIPRCKRTGKMPICYNGYCCCICSAKRLPASTTRKPPSPSTSKLV</sequence>
<evidence type="ECO:0000250" key="1"/>
<evidence type="ECO:0000255" key="2"/>
<evidence type="ECO:0000305" key="3"/>
<comment type="subcellular location">
    <subcellularLocation>
        <location evidence="1">Secreted</location>
    </subcellularLocation>
</comment>
<comment type="similarity">
    <text evidence="3">Belongs to the DEFL family.</text>
</comment>
<comment type="caution">
    <text evidence="3">Lacks 1 of the 4 disulfide bonds, which are conserved features of the family.</text>
</comment>
<keyword id="KW-0929">Antimicrobial</keyword>
<keyword id="KW-1015">Disulfide bond</keyword>
<keyword id="KW-0295">Fungicide</keyword>
<keyword id="KW-0611">Plant defense</keyword>
<keyword id="KW-1185">Reference proteome</keyword>
<keyword id="KW-0964">Secreted</keyword>
<keyword id="KW-0732">Signal</keyword>
<dbReference type="EMBL" id="AC009400">
    <property type="status" value="NOT_ANNOTATED_CDS"/>
    <property type="molecule type" value="Genomic_DNA"/>
</dbReference>
<dbReference type="EMBL" id="CP002686">
    <property type="protein sequence ID" value="AEE74870.1"/>
    <property type="molecule type" value="Genomic_DNA"/>
</dbReference>
<dbReference type="RefSeq" id="NP_001030667.1">
    <property type="nucleotide sequence ID" value="NM_001035590.2"/>
</dbReference>
<dbReference type="iPTMnet" id="Q2V3X3"/>
<dbReference type="PaxDb" id="3702-AT3G10195.1"/>
<dbReference type="EnsemblPlants" id="AT3G10195.1">
    <property type="protein sequence ID" value="AT3G10195.1"/>
    <property type="gene ID" value="AT3G10195"/>
</dbReference>
<dbReference type="GeneID" id="3768836"/>
<dbReference type="Gramene" id="AT3G10195.1">
    <property type="protein sequence ID" value="AT3G10195.1"/>
    <property type="gene ID" value="AT3G10195"/>
</dbReference>
<dbReference type="KEGG" id="ath:AT3G10195"/>
<dbReference type="Araport" id="AT3G10195"/>
<dbReference type="TAIR" id="AT3G10195"/>
<dbReference type="HOGENOM" id="CLU_197802_0_0_1"/>
<dbReference type="InParanoid" id="Q2V3X3"/>
<dbReference type="OMA" id="GKMPICY"/>
<dbReference type="PRO" id="PR:Q2V3X3"/>
<dbReference type="Proteomes" id="UP000006548">
    <property type="component" value="Chromosome 3"/>
</dbReference>
<dbReference type="ExpressionAtlas" id="Q2V3X3">
    <property type="expression patterns" value="baseline and differential"/>
</dbReference>
<dbReference type="GO" id="GO:0005576">
    <property type="term" value="C:extracellular region"/>
    <property type="evidence" value="ECO:0007669"/>
    <property type="project" value="UniProtKB-SubCell"/>
</dbReference>
<dbReference type="GO" id="GO:0050832">
    <property type="term" value="P:defense response to fungus"/>
    <property type="evidence" value="ECO:0007669"/>
    <property type="project" value="UniProtKB-KW"/>
</dbReference>
<dbReference type="GO" id="GO:0031640">
    <property type="term" value="P:killing of cells of another organism"/>
    <property type="evidence" value="ECO:0007669"/>
    <property type="project" value="UniProtKB-KW"/>
</dbReference>
<accession>Q2V3X3</accession>
<organism>
    <name type="scientific">Arabidopsis thaliana</name>
    <name type="common">Mouse-ear cress</name>
    <dbReference type="NCBI Taxonomy" id="3702"/>
    <lineage>
        <taxon>Eukaryota</taxon>
        <taxon>Viridiplantae</taxon>
        <taxon>Streptophyta</taxon>
        <taxon>Embryophyta</taxon>
        <taxon>Tracheophyta</taxon>
        <taxon>Spermatophyta</taxon>
        <taxon>Magnoliopsida</taxon>
        <taxon>eudicotyledons</taxon>
        <taxon>Gunneridae</taxon>
        <taxon>Pentapetalae</taxon>
        <taxon>rosids</taxon>
        <taxon>malvids</taxon>
        <taxon>Brassicales</taxon>
        <taxon>Brassicaceae</taxon>
        <taxon>Camelineae</taxon>
        <taxon>Arabidopsis</taxon>
    </lineage>
</organism>
<feature type="signal peptide" evidence="2">
    <location>
        <begin position="1"/>
        <end position="24"/>
    </location>
</feature>
<feature type="chain" id="PRO_0000379767" description="Defensin-like protein 311">
    <location>
        <begin position="25"/>
        <end position="81"/>
    </location>
</feature>
<feature type="disulfide bond" evidence="1">
    <location>
        <begin position="27"/>
        <end position="50"/>
    </location>
</feature>
<feature type="disulfide bond" evidence="1">
    <location>
        <begin position="33"/>
        <end position="57"/>
    </location>
</feature>
<feature type="disulfide bond" evidence="1">
    <location>
        <begin position="41"/>
        <end position="59"/>
    </location>
</feature>
<name>DF311_ARATH</name>
<gene>
    <name type="ordered locus">At3g10195</name>
    <name type="ORF">F14P13</name>
</gene>
<protein>
    <recommendedName>
        <fullName>Defensin-like protein 311</fullName>
    </recommendedName>
</protein>
<proteinExistence type="evidence at transcript level"/>